<proteinExistence type="inferred from homology"/>
<feature type="chain" id="PRO_1000145768" description="Iron-binding protein IscA">
    <location>
        <begin position="1"/>
        <end position="107"/>
    </location>
</feature>
<feature type="binding site" evidence="1">
    <location>
        <position position="35"/>
    </location>
    <ligand>
        <name>Fe cation</name>
        <dbReference type="ChEBI" id="CHEBI:24875"/>
    </ligand>
</feature>
<feature type="binding site" evidence="1">
    <location>
        <position position="99"/>
    </location>
    <ligand>
        <name>Fe cation</name>
        <dbReference type="ChEBI" id="CHEBI:24875"/>
    </ligand>
</feature>
<feature type="binding site" evidence="1">
    <location>
        <position position="101"/>
    </location>
    <ligand>
        <name>Fe cation</name>
        <dbReference type="ChEBI" id="CHEBI:24875"/>
    </ligand>
</feature>
<protein>
    <recommendedName>
        <fullName evidence="1">Iron-binding protein IscA</fullName>
    </recommendedName>
    <alternativeName>
        <fullName evidence="1">Iron-sulfur cluster assembly protein</fullName>
    </alternativeName>
</protein>
<comment type="function">
    <text evidence="1">Is able to transfer iron-sulfur clusters to apo-ferredoxin. Multiple cycles of [2Fe2S] cluster formation and transfer are observed, suggesting that IscA acts catalytically. Recruits intracellular free iron so as to provide iron for the assembly of transient iron-sulfur cluster in IscU in the presence of IscS, L-cysteine and the thioredoxin reductase system TrxA/TrxB.</text>
</comment>
<comment type="cofactor">
    <cofactor evidence="1">
        <name>Fe cation</name>
        <dbReference type="ChEBI" id="CHEBI:24875"/>
    </cofactor>
    <text evidence="1">Binds 2 iron ions per dimer. The dimer may bind additional iron ions.</text>
</comment>
<comment type="subunit">
    <text evidence="1">Homodimer; may form tetramers and higher multimers.</text>
</comment>
<comment type="similarity">
    <text evidence="1">Belongs to the HesB/IscA family.</text>
</comment>
<keyword id="KW-0408">Iron</keyword>
<keyword id="KW-0479">Metal-binding</keyword>
<organism>
    <name type="scientific">Yersinia pestis bv. Antiqua (strain Angola)</name>
    <dbReference type="NCBI Taxonomy" id="349746"/>
    <lineage>
        <taxon>Bacteria</taxon>
        <taxon>Pseudomonadati</taxon>
        <taxon>Pseudomonadota</taxon>
        <taxon>Gammaproteobacteria</taxon>
        <taxon>Enterobacterales</taxon>
        <taxon>Yersiniaceae</taxon>
        <taxon>Yersinia</taxon>
    </lineage>
</organism>
<gene>
    <name evidence="1" type="primary">iscA</name>
    <name type="ordered locus">YpAngola_A0433</name>
</gene>
<accession>A9R816</accession>
<reference key="1">
    <citation type="journal article" date="2010" name="J. Bacteriol.">
        <title>Genome sequence of the deep-rooted Yersinia pestis strain Angola reveals new insights into the evolution and pangenome of the plague bacterium.</title>
        <authorList>
            <person name="Eppinger M."/>
            <person name="Worsham P.L."/>
            <person name="Nikolich M.P."/>
            <person name="Riley D.R."/>
            <person name="Sebastian Y."/>
            <person name="Mou S."/>
            <person name="Achtman M."/>
            <person name="Lindler L.E."/>
            <person name="Ravel J."/>
        </authorList>
    </citation>
    <scope>NUCLEOTIDE SEQUENCE [LARGE SCALE GENOMIC DNA]</scope>
    <source>
        <strain>Angola</strain>
    </source>
</reference>
<dbReference type="EMBL" id="CP000901">
    <property type="protein sequence ID" value="ABX88152.1"/>
    <property type="molecule type" value="Genomic_DNA"/>
</dbReference>
<dbReference type="RefSeq" id="WP_002209834.1">
    <property type="nucleotide sequence ID" value="NZ_CP009935.1"/>
</dbReference>
<dbReference type="SMR" id="A9R816"/>
<dbReference type="GeneID" id="96662216"/>
<dbReference type="KEGG" id="ypg:YpAngola_A0433"/>
<dbReference type="PATRIC" id="fig|349746.12.peg.1388"/>
<dbReference type="GO" id="GO:0005829">
    <property type="term" value="C:cytosol"/>
    <property type="evidence" value="ECO:0007669"/>
    <property type="project" value="TreeGrafter"/>
</dbReference>
<dbReference type="GO" id="GO:0051537">
    <property type="term" value="F:2 iron, 2 sulfur cluster binding"/>
    <property type="evidence" value="ECO:0007669"/>
    <property type="project" value="TreeGrafter"/>
</dbReference>
<dbReference type="GO" id="GO:0005506">
    <property type="term" value="F:iron ion binding"/>
    <property type="evidence" value="ECO:0007669"/>
    <property type="project" value="UniProtKB-UniRule"/>
</dbReference>
<dbReference type="GO" id="GO:0016226">
    <property type="term" value="P:iron-sulfur cluster assembly"/>
    <property type="evidence" value="ECO:0007669"/>
    <property type="project" value="UniProtKB-UniRule"/>
</dbReference>
<dbReference type="FunFam" id="2.60.300.12:FF:000001">
    <property type="entry name" value="Iron-binding protein IscA"/>
    <property type="match status" value="1"/>
</dbReference>
<dbReference type="Gene3D" id="2.60.300.12">
    <property type="entry name" value="HesB-like domain"/>
    <property type="match status" value="1"/>
</dbReference>
<dbReference type="HAMAP" id="MF_01429">
    <property type="entry name" value="Fe_S_insert_IscA"/>
    <property type="match status" value="1"/>
</dbReference>
<dbReference type="InterPro" id="IPR050322">
    <property type="entry name" value="Fe-S_cluster_asmbl/transfer"/>
</dbReference>
<dbReference type="InterPro" id="IPR000361">
    <property type="entry name" value="FeS_biogenesis"/>
</dbReference>
<dbReference type="InterPro" id="IPR016092">
    <property type="entry name" value="FeS_cluster_insertion"/>
</dbReference>
<dbReference type="InterPro" id="IPR017870">
    <property type="entry name" value="FeS_cluster_insertion_CS"/>
</dbReference>
<dbReference type="InterPro" id="IPR035903">
    <property type="entry name" value="HesB-like_dom_sf"/>
</dbReference>
<dbReference type="InterPro" id="IPR011302">
    <property type="entry name" value="IscA_proteobacteria"/>
</dbReference>
<dbReference type="NCBIfam" id="TIGR00049">
    <property type="entry name" value="iron-sulfur cluster assembly accessory protein"/>
    <property type="match status" value="1"/>
</dbReference>
<dbReference type="NCBIfam" id="TIGR02011">
    <property type="entry name" value="IscA"/>
    <property type="match status" value="1"/>
</dbReference>
<dbReference type="NCBIfam" id="NF007049">
    <property type="entry name" value="PRK09502.1"/>
    <property type="match status" value="1"/>
</dbReference>
<dbReference type="PANTHER" id="PTHR10072:SF41">
    <property type="entry name" value="IRON-SULFUR CLUSTER ASSEMBLY 1 HOMOLOG, MITOCHONDRIAL"/>
    <property type="match status" value="1"/>
</dbReference>
<dbReference type="PANTHER" id="PTHR10072">
    <property type="entry name" value="IRON-SULFUR CLUSTER ASSEMBLY PROTEIN"/>
    <property type="match status" value="1"/>
</dbReference>
<dbReference type="Pfam" id="PF01521">
    <property type="entry name" value="Fe-S_biosyn"/>
    <property type="match status" value="1"/>
</dbReference>
<dbReference type="SUPFAM" id="SSF89360">
    <property type="entry name" value="HesB-like domain"/>
    <property type="match status" value="1"/>
</dbReference>
<dbReference type="PROSITE" id="PS01152">
    <property type="entry name" value="HESB"/>
    <property type="match status" value="1"/>
</dbReference>
<name>ISCA_YERPG</name>
<evidence type="ECO:0000255" key="1">
    <source>
        <dbReference type="HAMAP-Rule" id="MF_01429"/>
    </source>
</evidence>
<sequence>MSISISDSAAQRVSAFLNHRGKGLGLRLGVRTSGCSGMAYVLEFVDEINDDDIVFEDKGVKVIIDGKSMVYLDGTELDFVKEGLNEGFKFNNPNVSNECGCGESFNV</sequence>